<evidence type="ECO:0000255" key="1">
    <source>
        <dbReference type="HAMAP-Rule" id="MF_01350"/>
    </source>
</evidence>
<evidence type="ECO:0000256" key="2">
    <source>
        <dbReference type="SAM" id="MobiDB-lite"/>
    </source>
</evidence>
<protein>
    <recommendedName>
        <fullName evidence="1">NADH-quinone oxidoreductase subunit H</fullName>
        <ecNumber evidence="1">7.1.1.-</ecNumber>
    </recommendedName>
    <alternativeName>
        <fullName evidence="1">NADH dehydrogenase I subunit H</fullName>
    </alternativeName>
    <alternativeName>
        <fullName evidence="1">NDH-1 subunit H</fullName>
    </alternativeName>
</protein>
<reference key="1">
    <citation type="journal article" date="2002" name="J. Bacteriol.">
        <title>Whole-genome comparison of Mycobacterium tuberculosis clinical and laboratory strains.</title>
        <authorList>
            <person name="Fleischmann R.D."/>
            <person name="Alland D."/>
            <person name="Eisen J.A."/>
            <person name="Carpenter L."/>
            <person name="White O."/>
            <person name="Peterson J.D."/>
            <person name="DeBoy R.T."/>
            <person name="Dodson R.J."/>
            <person name="Gwinn M.L."/>
            <person name="Haft D.H."/>
            <person name="Hickey E.K."/>
            <person name="Kolonay J.F."/>
            <person name="Nelson W.C."/>
            <person name="Umayam L.A."/>
            <person name="Ermolaeva M.D."/>
            <person name="Salzberg S.L."/>
            <person name="Delcher A."/>
            <person name="Utterback T.R."/>
            <person name="Weidman J.F."/>
            <person name="Khouri H.M."/>
            <person name="Gill J."/>
            <person name="Mikula A."/>
            <person name="Bishai W."/>
            <person name="Jacobs W.R. Jr."/>
            <person name="Venter J.C."/>
            <person name="Fraser C.M."/>
        </authorList>
    </citation>
    <scope>NUCLEOTIDE SEQUENCE [LARGE SCALE GENOMIC DNA]</scope>
    <source>
        <strain>CDC 1551 / Oshkosh</strain>
    </source>
</reference>
<dbReference type="EC" id="7.1.1.-" evidence="1"/>
<dbReference type="EMBL" id="AE000516">
    <property type="protein sequence ID" value="AAK47579.1"/>
    <property type="molecule type" value="Genomic_DNA"/>
</dbReference>
<dbReference type="PIR" id="A70648">
    <property type="entry name" value="A70648"/>
</dbReference>
<dbReference type="RefSeq" id="WP_003416445.1">
    <property type="nucleotide sequence ID" value="NZ_KK341227.1"/>
</dbReference>
<dbReference type="SMR" id="P9WIX0"/>
<dbReference type="GeneID" id="45427139"/>
<dbReference type="KEGG" id="mtc:MT3240"/>
<dbReference type="PATRIC" id="fig|83331.31.peg.3488"/>
<dbReference type="HOGENOM" id="CLU_015134_0_0_11"/>
<dbReference type="Proteomes" id="UP000001020">
    <property type="component" value="Chromosome"/>
</dbReference>
<dbReference type="GO" id="GO:0005886">
    <property type="term" value="C:plasma membrane"/>
    <property type="evidence" value="ECO:0007669"/>
    <property type="project" value="UniProtKB-SubCell"/>
</dbReference>
<dbReference type="GO" id="GO:0003954">
    <property type="term" value="F:NADH dehydrogenase activity"/>
    <property type="evidence" value="ECO:0007669"/>
    <property type="project" value="TreeGrafter"/>
</dbReference>
<dbReference type="GO" id="GO:0016655">
    <property type="term" value="F:oxidoreductase activity, acting on NAD(P)H, quinone or similar compound as acceptor"/>
    <property type="evidence" value="ECO:0007669"/>
    <property type="project" value="UniProtKB-UniRule"/>
</dbReference>
<dbReference type="GO" id="GO:0048038">
    <property type="term" value="F:quinone binding"/>
    <property type="evidence" value="ECO:0007669"/>
    <property type="project" value="UniProtKB-KW"/>
</dbReference>
<dbReference type="GO" id="GO:0009060">
    <property type="term" value="P:aerobic respiration"/>
    <property type="evidence" value="ECO:0007669"/>
    <property type="project" value="TreeGrafter"/>
</dbReference>
<dbReference type="HAMAP" id="MF_01350">
    <property type="entry name" value="NDH1_NuoH"/>
    <property type="match status" value="1"/>
</dbReference>
<dbReference type="InterPro" id="IPR001694">
    <property type="entry name" value="NADH_UbQ_OxRdtase_su1/FPO"/>
</dbReference>
<dbReference type="InterPro" id="IPR018086">
    <property type="entry name" value="NADH_UbQ_OxRdtase_su1_CS"/>
</dbReference>
<dbReference type="NCBIfam" id="NF004741">
    <property type="entry name" value="PRK06076.1-2"/>
    <property type="match status" value="1"/>
</dbReference>
<dbReference type="NCBIfam" id="NF004743">
    <property type="entry name" value="PRK06076.1-4"/>
    <property type="match status" value="1"/>
</dbReference>
<dbReference type="PANTHER" id="PTHR11432">
    <property type="entry name" value="NADH DEHYDROGENASE SUBUNIT 1"/>
    <property type="match status" value="1"/>
</dbReference>
<dbReference type="PANTHER" id="PTHR11432:SF3">
    <property type="entry name" value="NADH-UBIQUINONE OXIDOREDUCTASE CHAIN 1"/>
    <property type="match status" value="1"/>
</dbReference>
<dbReference type="Pfam" id="PF00146">
    <property type="entry name" value="NADHdh"/>
    <property type="match status" value="1"/>
</dbReference>
<dbReference type="PROSITE" id="PS00667">
    <property type="entry name" value="COMPLEX1_ND1_1"/>
    <property type="match status" value="1"/>
</dbReference>
<dbReference type="PROSITE" id="PS00668">
    <property type="entry name" value="COMPLEX1_ND1_2"/>
    <property type="match status" value="1"/>
</dbReference>
<accession>P9WIX0</accession>
<accession>L0TBZ7</accession>
<accession>P65561</accession>
<accession>P95174</accession>
<feature type="chain" id="PRO_0000427931" description="NADH-quinone oxidoreductase subunit H">
    <location>
        <begin position="1"/>
        <end position="410"/>
    </location>
</feature>
<feature type="transmembrane region" description="Helical" evidence="1">
    <location>
        <begin position="11"/>
        <end position="31"/>
    </location>
</feature>
<feature type="transmembrane region" description="Helical" evidence="1">
    <location>
        <begin position="79"/>
        <end position="99"/>
    </location>
</feature>
<feature type="transmembrane region" description="Helical" evidence="1">
    <location>
        <begin position="119"/>
        <end position="139"/>
    </location>
</feature>
<feature type="transmembrane region" description="Helical" evidence="1">
    <location>
        <begin position="160"/>
        <end position="180"/>
    </location>
</feature>
<feature type="transmembrane region" description="Helical" evidence="1">
    <location>
        <begin position="192"/>
        <end position="212"/>
    </location>
</feature>
<feature type="transmembrane region" description="Helical" evidence="1">
    <location>
        <begin position="257"/>
        <end position="277"/>
    </location>
</feature>
<feature type="transmembrane region" description="Helical" evidence="1">
    <location>
        <begin position="283"/>
        <end position="303"/>
    </location>
</feature>
<feature type="transmembrane region" description="Helical" evidence="1">
    <location>
        <begin position="317"/>
        <end position="337"/>
    </location>
</feature>
<feature type="transmembrane region" description="Helical" evidence="1">
    <location>
        <begin position="347"/>
        <end position="367"/>
    </location>
</feature>
<feature type="region of interest" description="Disordered" evidence="2">
    <location>
        <begin position="376"/>
        <end position="410"/>
    </location>
</feature>
<proteinExistence type="inferred from homology"/>
<sequence>MTTFGHDTWWLVAAKAIAVFVFLMLTVLVAILAERKLLGRMQLRPGPNRVGPKGALQSLADGIKLALKESITPGGIDRFVYFVAPIISVIPAFTAFAFIPFGPEVSVFGHRTPLQITDLPVAVLFILGLSAIGVYGIVLGGWASGSTYPLLGGVRSTAQVISYEVAMGLSFATVFLMAGTMSTSQIVAAQDGVWYAFLLLPSFVIYLISMVGETNRAPFDLPEAEGELVAGFHTEYSSLKFAMFMLAEYVNMTTVSALAATLFFGGWHAPWPLNMWASANTGWWPLIWFTAKVWGFLFIYFWLRATLPRLRYDQFMALGWKLLIPVSLVWVMVAAIIRSLRNQGYQYWTPTLVFSSIVVAAAMVLLLRKPLSAPGARASARQRGDEGTSPEPAFPTPPLLAGATKENAGG</sequence>
<name>NUOH_MYCTO</name>
<organism>
    <name type="scientific">Mycobacterium tuberculosis (strain CDC 1551 / Oshkosh)</name>
    <dbReference type="NCBI Taxonomy" id="83331"/>
    <lineage>
        <taxon>Bacteria</taxon>
        <taxon>Bacillati</taxon>
        <taxon>Actinomycetota</taxon>
        <taxon>Actinomycetes</taxon>
        <taxon>Mycobacteriales</taxon>
        <taxon>Mycobacteriaceae</taxon>
        <taxon>Mycobacterium</taxon>
        <taxon>Mycobacterium tuberculosis complex</taxon>
    </lineage>
</organism>
<keyword id="KW-1003">Cell membrane</keyword>
<keyword id="KW-0472">Membrane</keyword>
<keyword id="KW-0520">NAD</keyword>
<keyword id="KW-0874">Quinone</keyword>
<keyword id="KW-1185">Reference proteome</keyword>
<keyword id="KW-1278">Translocase</keyword>
<keyword id="KW-0812">Transmembrane</keyword>
<keyword id="KW-1133">Transmembrane helix</keyword>
<comment type="function">
    <text evidence="1">NDH-1 shuttles electrons from NADH, via FMN and iron-sulfur (Fe-S) centers, to quinones in the respiratory chain. The immediate electron acceptor for the enzyme in this species is believed to be menaquinone. Couples the redox reaction to proton translocation (for every two electrons transferred, four hydrogen ions are translocated across the cytoplasmic membrane), and thus conserves the redox energy in a proton gradient.</text>
</comment>
<comment type="catalytic activity">
    <reaction evidence="1">
        <text>a quinone + NADH + 5 H(+)(in) = a quinol + NAD(+) + 4 H(+)(out)</text>
        <dbReference type="Rhea" id="RHEA:57888"/>
        <dbReference type="ChEBI" id="CHEBI:15378"/>
        <dbReference type="ChEBI" id="CHEBI:24646"/>
        <dbReference type="ChEBI" id="CHEBI:57540"/>
        <dbReference type="ChEBI" id="CHEBI:57945"/>
        <dbReference type="ChEBI" id="CHEBI:132124"/>
    </reaction>
</comment>
<comment type="subunit">
    <text evidence="1">NDH-1 is composed of 14 different subunits. Subunits NuoA, H, J, K, L, M, N constitute the membrane sector of the complex.</text>
</comment>
<comment type="subcellular location">
    <subcellularLocation>
        <location evidence="1">Cell membrane</location>
        <topology evidence="1">Multi-pass membrane protein</topology>
    </subcellularLocation>
</comment>
<comment type="similarity">
    <text evidence="1">Belongs to the complex I subunit 1 family.</text>
</comment>
<gene>
    <name evidence="1" type="primary">nuoH</name>
    <name type="ordered locus">MT3240</name>
</gene>